<comment type="function">
    <text evidence="1">Protein S19 forms a complex with S13 that binds strongly to the 16S ribosomal RNA.</text>
</comment>
<comment type="subcellular location">
    <subcellularLocation>
        <location>Plastid</location>
        <location>Chloroplast</location>
    </subcellularLocation>
</comment>
<comment type="similarity">
    <text evidence="1">Belongs to the universal ribosomal protein uS19 family.</text>
</comment>
<proteinExistence type="inferred from homology"/>
<keyword id="KW-0150">Chloroplast</keyword>
<keyword id="KW-0934">Plastid</keyword>
<keyword id="KW-1185">Reference proteome</keyword>
<keyword id="KW-0687">Ribonucleoprotein</keyword>
<keyword id="KW-0689">Ribosomal protein</keyword>
<keyword id="KW-0694">RNA-binding</keyword>
<keyword id="KW-0699">rRNA-binding</keyword>
<geneLocation type="chloroplast"/>
<sequence>MARSLKKNPFVANHLLKKIERLNTKAEKEIIITWSRASTIIPTMIGHTIAIHNGKEHLPIYITDRMVGHKLGEFAPTINFRGHAKNDNKSRR</sequence>
<protein>
    <recommendedName>
        <fullName evidence="1">Small ribosomal subunit protein uS19c</fullName>
    </recommendedName>
    <alternativeName>
        <fullName evidence="2">30S ribosomal protein S19, chloroplastic</fullName>
    </alternativeName>
</protein>
<reference key="1">
    <citation type="journal article" date="2006" name="BMC Genomics">
        <title>The complete chloroplast genome sequence of Gossypium hirsutum: organization and phylogenetic relationships to other angiosperms.</title>
        <authorList>
            <person name="Lee S.-B."/>
            <person name="Kaittanis C."/>
            <person name="Jansen R.K."/>
            <person name="Hostetler J.B."/>
            <person name="Tallon L.J."/>
            <person name="Town C.D."/>
            <person name="Daniell H."/>
        </authorList>
    </citation>
    <scope>NUCLEOTIDE SEQUENCE [LARGE SCALE GENOMIC DNA]</scope>
    <source>
        <strain>cv. Coker 310FR</strain>
    </source>
</reference>
<gene>
    <name evidence="1" type="primary">rps19</name>
</gene>
<accession>Q2L945</accession>
<organism>
    <name type="scientific">Gossypium hirsutum</name>
    <name type="common">Upland cotton</name>
    <name type="synonym">Gossypium mexicanum</name>
    <dbReference type="NCBI Taxonomy" id="3635"/>
    <lineage>
        <taxon>Eukaryota</taxon>
        <taxon>Viridiplantae</taxon>
        <taxon>Streptophyta</taxon>
        <taxon>Embryophyta</taxon>
        <taxon>Tracheophyta</taxon>
        <taxon>Spermatophyta</taxon>
        <taxon>Magnoliopsida</taxon>
        <taxon>eudicotyledons</taxon>
        <taxon>Gunneridae</taxon>
        <taxon>Pentapetalae</taxon>
        <taxon>rosids</taxon>
        <taxon>malvids</taxon>
        <taxon>Malvales</taxon>
        <taxon>Malvaceae</taxon>
        <taxon>Malvoideae</taxon>
        <taxon>Gossypium</taxon>
    </lineage>
</organism>
<name>RR19_GOSHI</name>
<evidence type="ECO:0000255" key="1">
    <source>
        <dbReference type="HAMAP-Rule" id="MF_00531"/>
    </source>
</evidence>
<evidence type="ECO:0000305" key="2"/>
<dbReference type="EMBL" id="DQ345959">
    <property type="protein sequence ID" value="ABC73666.1"/>
    <property type="molecule type" value="Genomic_DNA"/>
</dbReference>
<dbReference type="RefSeq" id="YP_538975.1">
    <property type="nucleotide sequence ID" value="NC_007944.1"/>
</dbReference>
<dbReference type="SMR" id="Q2L945"/>
<dbReference type="GeneID" id="3989143"/>
<dbReference type="KEGG" id="ghi:3989143"/>
<dbReference type="OrthoDB" id="9269at41938"/>
<dbReference type="Proteomes" id="UP000189702">
    <property type="component" value="Chloroplast Pltd"/>
</dbReference>
<dbReference type="GO" id="GO:0009507">
    <property type="term" value="C:chloroplast"/>
    <property type="evidence" value="ECO:0007669"/>
    <property type="project" value="UniProtKB-SubCell"/>
</dbReference>
<dbReference type="GO" id="GO:0005763">
    <property type="term" value="C:mitochondrial small ribosomal subunit"/>
    <property type="evidence" value="ECO:0000318"/>
    <property type="project" value="GO_Central"/>
</dbReference>
<dbReference type="GO" id="GO:0019843">
    <property type="term" value="F:rRNA binding"/>
    <property type="evidence" value="ECO:0007669"/>
    <property type="project" value="UniProtKB-UniRule"/>
</dbReference>
<dbReference type="GO" id="GO:0003735">
    <property type="term" value="F:structural constituent of ribosome"/>
    <property type="evidence" value="ECO:0000318"/>
    <property type="project" value="GO_Central"/>
</dbReference>
<dbReference type="GO" id="GO:0000028">
    <property type="term" value="P:ribosomal small subunit assembly"/>
    <property type="evidence" value="ECO:0000318"/>
    <property type="project" value="GO_Central"/>
</dbReference>
<dbReference type="GO" id="GO:0006412">
    <property type="term" value="P:translation"/>
    <property type="evidence" value="ECO:0007669"/>
    <property type="project" value="UniProtKB-UniRule"/>
</dbReference>
<dbReference type="FunFam" id="3.30.860.10:FF:000001">
    <property type="entry name" value="30S ribosomal protein S19"/>
    <property type="match status" value="1"/>
</dbReference>
<dbReference type="Gene3D" id="3.30.860.10">
    <property type="entry name" value="30s Ribosomal Protein S19, Chain A"/>
    <property type="match status" value="1"/>
</dbReference>
<dbReference type="HAMAP" id="MF_00531">
    <property type="entry name" value="Ribosomal_uS19"/>
    <property type="match status" value="1"/>
</dbReference>
<dbReference type="InterPro" id="IPR002222">
    <property type="entry name" value="Ribosomal_uS19"/>
</dbReference>
<dbReference type="InterPro" id="IPR005732">
    <property type="entry name" value="Ribosomal_uS19_bac-type"/>
</dbReference>
<dbReference type="InterPro" id="IPR020934">
    <property type="entry name" value="Ribosomal_uS19_CS"/>
</dbReference>
<dbReference type="InterPro" id="IPR023575">
    <property type="entry name" value="Ribosomal_uS19_SF"/>
</dbReference>
<dbReference type="NCBIfam" id="TIGR01050">
    <property type="entry name" value="rpsS_bact"/>
    <property type="match status" value="1"/>
</dbReference>
<dbReference type="PANTHER" id="PTHR11880">
    <property type="entry name" value="RIBOSOMAL PROTEIN S19P FAMILY MEMBER"/>
    <property type="match status" value="1"/>
</dbReference>
<dbReference type="PANTHER" id="PTHR11880:SF8">
    <property type="entry name" value="SMALL RIBOSOMAL SUBUNIT PROTEIN US19M"/>
    <property type="match status" value="1"/>
</dbReference>
<dbReference type="Pfam" id="PF00203">
    <property type="entry name" value="Ribosomal_S19"/>
    <property type="match status" value="1"/>
</dbReference>
<dbReference type="PIRSF" id="PIRSF002144">
    <property type="entry name" value="Ribosomal_S19"/>
    <property type="match status" value="1"/>
</dbReference>
<dbReference type="PRINTS" id="PR00975">
    <property type="entry name" value="RIBOSOMALS19"/>
</dbReference>
<dbReference type="SUPFAM" id="SSF54570">
    <property type="entry name" value="Ribosomal protein S19"/>
    <property type="match status" value="1"/>
</dbReference>
<dbReference type="PROSITE" id="PS00323">
    <property type="entry name" value="RIBOSOMAL_S19"/>
    <property type="match status" value="1"/>
</dbReference>
<feature type="chain" id="PRO_0000276908" description="Small ribosomal subunit protein uS19c">
    <location>
        <begin position="1"/>
        <end position="92"/>
    </location>
</feature>